<reference key="1">
    <citation type="submission" date="2007-02" db="EMBL/GenBank/DDBJ databases">
        <title>Complete sequence of chromosome of Yersinia pestis Pestoides F.</title>
        <authorList>
            <consortium name="US DOE Joint Genome Institute"/>
            <person name="Copeland A."/>
            <person name="Lucas S."/>
            <person name="Lapidus A."/>
            <person name="Barry K."/>
            <person name="Detter J.C."/>
            <person name="Glavina del Rio T."/>
            <person name="Hammon N."/>
            <person name="Israni S."/>
            <person name="Dalin E."/>
            <person name="Tice H."/>
            <person name="Pitluck S."/>
            <person name="Di Bartolo G."/>
            <person name="Chain P."/>
            <person name="Malfatti S."/>
            <person name="Shin M."/>
            <person name="Vergez L."/>
            <person name="Schmutz J."/>
            <person name="Larimer F."/>
            <person name="Land M."/>
            <person name="Hauser L."/>
            <person name="Worsham P."/>
            <person name="Chu M."/>
            <person name="Bearden S."/>
            <person name="Garcia E."/>
            <person name="Richardson P."/>
        </authorList>
    </citation>
    <scope>NUCLEOTIDE SEQUENCE [LARGE SCALE GENOMIC DNA]</scope>
    <source>
        <strain>Pestoides F</strain>
    </source>
</reference>
<sequence length="360" mass="40077">MLVWLAEYLVKFYSGFNVFSYLTFRAIVSLLTALFISLWMGPHLIAWLQKLQIGQVVRNDGPESHFSKRGTPTMGGLMILFSITISVLMWAYPSNPYVWCVLFILIGYGIVGFIDDYRKVVRKNTKGLIARWKYFWQSIIALAAAFTMYSIGKDTSATELVVPFFKDIMPQLGLLYVLLAYFVIVGTSNAVNLTDGLDGLAIMPTVFVAAGFALVAWATGNVNFAAYLHIPYLRHAGELVIVCTAIVGAGLGFLWFNTYPAQVFMGDVGSLALGGALGTIAVLLRQEFLLVIMGGVFVVETLSVILQVGSFKLRGQRIFRMAPIHHHYELKGWPEPRVIVRFWIISLMLVLIGLATLKVR</sequence>
<evidence type="ECO:0000255" key="1">
    <source>
        <dbReference type="HAMAP-Rule" id="MF_00038"/>
    </source>
</evidence>
<organism>
    <name type="scientific">Yersinia pestis (strain Pestoides F)</name>
    <dbReference type="NCBI Taxonomy" id="386656"/>
    <lineage>
        <taxon>Bacteria</taxon>
        <taxon>Pseudomonadati</taxon>
        <taxon>Pseudomonadota</taxon>
        <taxon>Gammaproteobacteria</taxon>
        <taxon>Enterobacterales</taxon>
        <taxon>Yersiniaceae</taxon>
        <taxon>Yersinia</taxon>
    </lineage>
</organism>
<comment type="function">
    <text evidence="1">Catalyzes the initial step of the lipid cycle reactions in the biosynthesis of the cell wall peptidoglycan: transfers peptidoglycan precursor phospho-MurNAc-pentapeptide from UDP-MurNAc-pentapeptide onto the lipid carrier undecaprenyl phosphate, yielding undecaprenyl-pyrophosphoryl-MurNAc-pentapeptide, known as lipid I.</text>
</comment>
<comment type="catalytic activity">
    <reaction evidence="1">
        <text>UDP-N-acetyl-alpha-D-muramoyl-L-alanyl-gamma-D-glutamyl-meso-2,6-diaminopimeloyl-D-alanyl-D-alanine + di-trans,octa-cis-undecaprenyl phosphate = di-trans,octa-cis-undecaprenyl diphospho-N-acetyl-alpha-D-muramoyl-L-alanyl-D-glutamyl-meso-2,6-diaminopimeloyl-D-alanyl-D-alanine + UMP</text>
        <dbReference type="Rhea" id="RHEA:28386"/>
        <dbReference type="ChEBI" id="CHEBI:57865"/>
        <dbReference type="ChEBI" id="CHEBI:60392"/>
        <dbReference type="ChEBI" id="CHEBI:61386"/>
        <dbReference type="ChEBI" id="CHEBI:61387"/>
        <dbReference type="EC" id="2.7.8.13"/>
    </reaction>
</comment>
<comment type="cofactor">
    <cofactor evidence="1">
        <name>Mg(2+)</name>
        <dbReference type="ChEBI" id="CHEBI:18420"/>
    </cofactor>
</comment>
<comment type="pathway">
    <text evidence="1">Cell wall biogenesis; peptidoglycan biosynthesis.</text>
</comment>
<comment type="subcellular location">
    <subcellularLocation>
        <location evidence="1">Cell inner membrane</location>
        <topology evidence="1">Multi-pass membrane protein</topology>
    </subcellularLocation>
</comment>
<comment type="similarity">
    <text evidence="1">Belongs to the glycosyltransferase 4 family. MraY subfamily.</text>
</comment>
<dbReference type="EC" id="2.7.8.13" evidence="1"/>
<dbReference type="EMBL" id="CP000668">
    <property type="protein sequence ID" value="ABP41448.1"/>
    <property type="molecule type" value="Genomic_DNA"/>
</dbReference>
<dbReference type="RefSeq" id="WP_002210437.1">
    <property type="nucleotide sequence ID" value="NZ_CP009715.1"/>
</dbReference>
<dbReference type="SMR" id="A4TQ86"/>
<dbReference type="GeneID" id="57974063"/>
<dbReference type="KEGG" id="ypp:YPDSF_3090"/>
<dbReference type="PATRIC" id="fig|386656.14.peg.1270"/>
<dbReference type="UniPathway" id="UPA00219"/>
<dbReference type="GO" id="GO:0005886">
    <property type="term" value="C:plasma membrane"/>
    <property type="evidence" value="ECO:0007669"/>
    <property type="project" value="UniProtKB-SubCell"/>
</dbReference>
<dbReference type="GO" id="GO:0046872">
    <property type="term" value="F:metal ion binding"/>
    <property type="evidence" value="ECO:0007669"/>
    <property type="project" value="UniProtKB-KW"/>
</dbReference>
<dbReference type="GO" id="GO:0008963">
    <property type="term" value="F:phospho-N-acetylmuramoyl-pentapeptide-transferase activity"/>
    <property type="evidence" value="ECO:0007669"/>
    <property type="project" value="UniProtKB-UniRule"/>
</dbReference>
<dbReference type="GO" id="GO:0051992">
    <property type="term" value="F:UDP-N-acetylmuramoyl-L-alanyl-D-glutamyl-meso-2,6-diaminopimelyl-D-alanyl-D-alanine:undecaprenyl-phosphate transferase activity"/>
    <property type="evidence" value="ECO:0007669"/>
    <property type="project" value="RHEA"/>
</dbReference>
<dbReference type="GO" id="GO:0051301">
    <property type="term" value="P:cell division"/>
    <property type="evidence" value="ECO:0007669"/>
    <property type="project" value="UniProtKB-KW"/>
</dbReference>
<dbReference type="GO" id="GO:0071555">
    <property type="term" value="P:cell wall organization"/>
    <property type="evidence" value="ECO:0007669"/>
    <property type="project" value="UniProtKB-KW"/>
</dbReference>
<dbReference type="GO" id="GO:0009252">
    <property type="term" value="P:peptidoglycan biosynthetic process"/>
    <property type="evidence" value="ECO:0007669"/>
    <property type="project" value="UniProtKB-UniRule"/>
</dbReference>
<dbReference type="GO" id="GO:0008360">
    <property type="term" value="P:regulation of cell shape"/>
    <property type="evidence" value="ECO:0007669"/>
    <property type="project" value="UniProtKB-KW"/>
</dbReference>
<dbReference type="CDD" id="cd06852">
    <property type="entry name" value="GT_MraY"/>
    <property type="match status" value="1"/>
</dbReference>
<dbReference type="HAMAP" id="MF_00038">
    <property type="entry name" value="MraY"/>
    <property type="match status" value="1"/>
</dbReference>
<dbReference type="InterPro" id="IPR000715">
    <property type="entry name" value="Glycosyl_transferase_4"/>
</dbReference>
<dbReference type="InterPro" id="IPR003524">
    <property type="entry name" value="PNAcMuramoyl-5peptid_Trfase"/>
</dbReference>
<dbReference type="InterPro" id="IPR018480">
    <property type="entry name" value="PNAcMuramoyl-5peptid_Trfase_CS"/>
</dbReference>
<dbReference type="NCBIfam" id="TIGR00445">
    <property type="entry name" value="mraY"/>
    <property type="match status" value="1"/>
</dbReference>
<dbReference type="PANTHER" id="PTHR22926">
    <property type="entry name" value="PHOSPHO-N-ACETYLMURAMOYL-PENTAPEPTIDE-TRANSFERASE"/>
    <property type="match status" value="1"/>
</dbReference>
<dbReference type="PANTHER" id="PTHR22926:SF5">
    <property type="entry name" value="PHOSPHO-N-ACETYLMURAMOYL-PENTAPEPTIDE-TRANSFERASE HOMOLOG"/>
    <property type="match status" value="1"/>
</dbReference>
<dbReference type="Pfam" id="PF00953">
    <property type="entry name" value="Glycos_transf_4"/>
    <property type="match status" value="1"/>
</dbReference>
<dbReference type="Pfam" id="PF10555">
    <property type="entry name" value="MraY_sig1"/>
    <property type="match status" value="1"/>
</dbReference>
<dbReference type="PROSITE" id="PS01347">
    <property type="entry name" value="MRAY_1"/>
    <property type="match status" value="1"/>
</dbReference>
<dbReference type="PROSITE" id="PS01348">
    <property type="entry name" value="MRAY_2"/>
    <property type="match status" value="1"/>
</dbReference>
<proteinExistence type="inferred from homology"/>
<name>MRAY_YERPP</name>
<feature type="chain" id="PRO_1000003090" description="Phospho-N-acetylmuramoyl-pentapeptide-transferase">
    <location>
        <begin position="1"/>
        <end position="360"/>
    </location>
</feature>
<feature type="transmembrane region" description="Helical" evidence="1">
    <location>
        <begin position="27"/>
        <end position="47"/>
    </location>
</feature>
<feature type="transmembrane region" description="Helical" evidence="1">
    <location>
        <begin position="72"/>
        <end position="92"/>
    </location>
</feature>
<feature type="transmembrane region" description="Helical" evidence="1">
    <location>
        <begin position="94"/>
        <end position="114"/>
    </location>
</feature>
<feature type="transmembrane region" description="Helical" evidence="1">
    <location>
        <begin position="132"/>
        <end position="152"/>
    </location>
</feature>
<feature type="transmembrane region" description="Helical" evidence="1">
    <location>
        <begin position="168"/>
        <end position="188"/>
    </location>
</feature>
<feature type="transmembrane region" description="Helical" evidence="1">
    <location>
        <begin position="199"/>
        <end position="219"/>
    </location>
</feature>
<feature type="transmembrane region" description="Helical" evidence="1">
    <location>
        <begin position="236"/>
        <end position="256"/>
    </location>
</feature>
<feature type="transmembrane region" description="Helical" evidence="1">
    <location>
        <begin position="263"/>
        <end position="283"/>
    </location>
</feature>
<feature type="transmembrane region" description="Helical" evidence="1">
    <location>
        <begin position="288"/>
        <end position="308"/>
    </location>
</feature>
<feature type="transmembrane region" description="Helical" evidence="1">
    <location>
        <begin position="338"/>
        <end position="358"/>
    </location>
</feature>
<keyword id="KW-0131">Cell cycle</keyword>
<keyword id="KW-0132">Cell division</keyword>
<keyword id="KW-0997">Cell inner membrane</keyword>
<keyword id="KW-1003">Cell membrane</keyword>
<keyword id="KW-0133">Cell shape</keyword>
<keyword id="KW-0961">Cell wall biogenesis/degradation</keyword>
<keyword id="KW-0460">Magnesium</keyword>
<keyword id="KW-0472">Membrane</keyword>
<keyword id="KW-0479">Metal-binding</keyword>
<keyword id="KW-0573">Peptidoglycan synthesis</keyword>
<keyword id="KW-0808">Transferase</keyword>
<keyword id="KW-0812">Transmembrane</keyword>
<keyword id="KW-1133">Transmembrane helix</keyword>
<protein>
    <recommendedName>
        <fullName evidence="1">Phospho-N-acetylmuramoyl-pentapeptide-transferase</fullName>
        <ecNumber evidence="1">2.7.8.13</ecNumber>
    </recommendedName>
    <alternativeName>
        <fullName evidence="1">UDP-MurNAc-pentapeptide phosphotransferase</fullName>
    </alternativeName>
</protein>
<gene>
    <name evidence="1" type="primary">mraY</name>
    <name type="ordered locus">YPDSF_3090</name>
</gene>
<accession>A4TQ86</accession>